<evidence type="ECO:0000255" key="1">
    <source>
        <dbReference type="HAMAP-Rule" id="MF_01445"/>
    </source>
</evidence>
<dbReference type="EC" id="2.3.1.234" evidence="1"/>
<dbReference type="EMBL" id="AE014299">
    <property type="protein sequence ID" value="AAN54356.1"/>
    <property type="molecule type" value="Genomic_DNA"/>
</dbReference>
<dbReference type="RefSeq" id="NP_716911.1">
    <property type="nucleotide sequence ID" value="NC_004347.2"/>
</dbReference>
<dbReference type="RefSeq" id="WP_011071502.1">
    <property type="nucleotide sequence ID" value="NC_004347.2"/>
</dbReference>
<dbReference type="SMR" id="Q8EHD6"/>
<dbReference type="STRING" id="211586.SO_1289"/>
<dbReference type="PaxDb" id="211586-SO_1289"/>
<dbReference type="KEGG" id="son:SO_1289"/>
<dbReference type="PATRIC" id="fig|211586.12.peg.1235"/>
<dbReference type="eggNOG" id="COG0533">
    <property type="taxonomic scope" value="Bacteria"/>
</dbReference>
<dbReference type="HOGENOM" id="CLU_023208_0_0_6"/>
<dbReference type="OrthoDB" id="9806197at2"/>
<dbReference type="PhylomeDB" id="Q8EHD6"/>
<dbReference type="BioCyc" id="SONE211586:G1GMP-1190-MONOMER"/>
<dbReference type="Proteomes" id="UP000008186">
    <property type="component" value="Chromosome"/>
</dbReference>
<dbReference type="GO" id="GO:0005737">
    <property type="term" value="C:cytoplasm"/>
    <property type="evidence" value="ECO:0007669"/>
    <property type="project" value="UniProtKB-SubCell"/>
</dbReference>
<dbReference type="GO" id="GO:0005506">
    <property type="term" value="F:iron ion binding"/>
    <property type="evidence" value="ECO:0007669"/>
    <property type="project" value="UniProtKB-UniRule"/>
</dbReference>
<dbReference type="GO" id="GO:0061711">
    <property type="term" value="F:N(6)-L-threonylcarbamoyladenine synthase activity"/>
    <property type="evidence" value="ECO:0007669"/>
    <property type="project" value="UniProtKB-EC"/>
</dbReference>
<dbReference type="GO" id="GO:0002949">
    <property type="term" value="P:tRNA threonylcarbamoyladenosine modification"/>
    <property type="evidence" value="ECO:0007669"/>
    <property type="project" value="UniProtKB-UniRule"/>
</dbReference>
<dbReference type="CDD" id="cd24133">
    <property type="entry name" value="ASKHA_NBD_TsaD_bac"/>
    <property type="match status" value="1"/>
</dbReference>
<dbReference type="FunFam" id="3.30.420.40:FF:000031">
    <property type="entry name" value="tRNA N6-adenosine threonylcarbamoyltransferase"/>
    <property type="match status" value="1"/>
</dbReference>
<dbReference type="Gene3D" id="3.30.420.40">
    <property type="match status" value="2"/>
</dbReference>
<dbReference type="HAMAP" id="MF_01445">
    <property type="entry name" value="TsaD"/>
    <property type="match status" value="1"/>
</dbReference>
<dbReference type="InterPro" id="IPR043129">
    <property type="entry name" value="ATPase_NBD"/>
</dbReference>
<dbReference type="InterPro" id="IPR000905">
    <property type="entry name" value="Gcp-like_dom"/>
</dbReference>
<dbReference type="InterPro" id="IPR017861">
    <property type="entry name" value="KAE1/TsaD"/>
</dbReference>
<dbReference type="InterPro" id="IPR017860">
    <property type="entry name" value="Peptidase_M22_CS"/>
</dbReference>
<dbReference type="InterPro" id="IPR022450">
    <property type="entry name" value="TsaD"/>
</dbReference>
<dbReference type="NCBIfam" id="TIGR00329">
    <property type="entry name" value="gcp_kae1"/>
    <property type="match status" value="1"/>
</dbReference>
<dbReference type="NCBIfam" id="TIGR03723">
    <property type="entry name" value="T6A_TsaD_YgjD"/>
    <property type="match status" value="1"/>
</dbReference>
<dbReference type="PANTHER" id="PTHR11735">
    <property type="entry name" value="TRNA N6-ADENOSINE THREONYLCARBAMOYLTRANSFERASE"/>
    <property type="match status" value="1"/>
</dbReference>
<dbReference type="PANTHER" id="PTHR11735:SF6">
    <property type="entry name" value="TRNA N6-ADENOSINE THREONYLCARBAMOYLTRANSFERASE, MITOCHONDRIAL"/>
    <property type="match status" value="1"/>
</dbReference>
<dbReference type="Pfam" id="PF00814">
    <property type="entry name" value="TsaD"/>
    <property type="match status" value="1"/>
</dbReference>
<dbReference type="PRINTS" id="PR00789">
    <property type="entry name" value="OSIALOPTASE"/>
</dbReference>
<dbReference type="SUPFAM" id="SSF53067">
    <property type="entry name" value="Actin-like ATPase domain"/>
    <property type="match status" value="2"/>
</dbReference>
<dbReference type="PROSITE" id="PS01016">
    <property type="entry name" value="GLYCOPROTEASE"/>
    <property type="match status" value="1"/>
</dbReference>
<feature type="chain" id="PRO_0000303534" description="tRNA N6-adenosine threonylcarbamoyltransferase">
    <location>
        <begin position="1"/>
        <end position="338"/>
    </location>
</feature>
<feature type="binding site" evidence="1">
    <location>
        <position position="111"/>
    </location>
    <ligand>
        <name>Fe cation</name>
        <dbReference type="ChEBI" id="CHEBI:24875"/>
    </ligand>
</feature>
<feature type="binding site" evidence="1">
    <location>
        <position position="115"/>
    </location>
    <ligand>
        <name>Fe cation</name>
        <dbReference type="ChEBI" id="CHEBI:24875"/>
    </ligand>
</feature>
<feature type="binding site" evidence="1">
    <location>
        <begin position="134"/>
        <end position="138"/>
    </location>
    <ligand>
        <name>substrate</name>
    </ligand>
</feature>
<feature type="binding site" evidence="1">
    <location>
        <position position="167"/>
    </location>
    <ligand>
        <name>substrate</name>
    </ligand>
</feature>
<feature type="binding site" evidence="1">
    <location>
        <position position="180"/>
    </location>
    <ligand>
        <name>substrate</name>
    </ligand>
</feature>
<feature type="binding site" evidence="1">
    <location>
        <position position="272"/>
    </location>
    <ligand>
        <name>substrate</name>
    </ligand>
</feature>
<feature type="binding site" evidence="1">
    <location>
        <position position="300"/>
    </location>
    <ligand>
        <name>Fe cation</name>
        <dbReference type="ChEBI" id="CHEBI:24875"/>
    </ligand>
</feature>
<keyword id="KW-0012">Acyltransferase</keyword>
<keyword id="KW-0963">Cytoplasm</keyword>
<keyword id="KW-0408">Iron</keyword>
<keyword id="KW-0479">Metal-binding</keyword>
<keyword id="KW-1185">Reference proteome</keyword>
<keyword id="KW-0808">Transferase</keyword>
<keyword id="KW-0819">tRNA processing</keyword>
<proteinExistence type="inferred from homology"/>
<protein>
    <recommendedName>
        <fullName evidence="1">tRNA N6-adenosine threonylcarbamoyltransferase</fullName>
        <ecNumber evidence="1">2.3.1.234</ecNumber>
    </recommendedName>
    <alternativeName>
        <fullName evidence="1">N6-L-threonylcarbamoyladenine synthase</fullName>
        <shortName evidence="1">t(6)A synthase</shortName>
    </alternativeName>
    <alternativeName>
        <fullName evidence="1">t(6)A37 threonylcarbamoyladenosine biosynthesis protein TsaD</fullName>
    </alternativeName>
    <alternativeName>
        <fullName evidence="1">tRNA threonylcarbamoyladenosine biosynthesis protein TsaD</fullName>
    </alternativeName>
</protein>
<name>TSAD_SHEON</name>
<comment type="function">
    <text evidence="1">Required for the formation of a threonylcarbamoyl group on adenosine at position 37 (t(6)A37) in tRNAs that read codons beginning with adenine. Is involved in the transfer of the threonylcarbamoyl moiety of threonylcarbamoyl-AMP (TC-AMP) to the N6 group of A37, together with TsaE and TsaB. TsaD likely plays a direct catalytic role in this reaction.</text>
</comment>
<comment type="catalytic activity">
    <reaction evidence="1">
        <text>L-threonylcarbamoyladenylate + adenosine(37) in tRNA = N(6)-L-threonylcarbamoyladenosine(37) in tRNA + AMP + H(+)</text>
        <dbReference type="Rhea" id="RHEA:37059"/>
        <dbReference type="Rhea" id="RHEA-COMP:10162"/>
        <dbReference type="Rhea" id="RHEA-COMP:10163"/>
        <dbReference type="ChEBI" id="CHEBI:15378"/>
        <dbReference type="ChEBI" id="CHEBI:73682"/>
        <dbReference type="ChEBI" id="CHEBI:74411"/>
        <dbReference type="ChEBI" id="CHEBI:74418"/>
        <dbReference type="ChEBI" id="CHEBI:456215"/>
        <dbReference type="EC" id="2.3.1.234"/>
    </reaction>
</comment>
<comment type="cofactor">
    <cofactor evidence="1">
        <name>Fe(2+)</name>
        <dbReference type="ChEBI" id="CHEBI:29033"/>
    </cofactor>
    <text evidence="1">Binds 1 Fe(2+) ion per subunit.</text>
</comment>
<comment type="subcellular location">
    <subcellularLocation>
        <location evidence="1">Cytoplasm</location>
    </subcellularLocation>
</comment>
<comment type="similarity">
    <text evidence="1">Belongs to the KAE1 / TsaD family.</text>
</comment>
<organism>
    <name type="scientific">Shewanella oneidensis (strain ATCC 700550 / JCM 31522 / CIP 106686 / LMG 19005 / NCIMB 14063 / MR-1)</name>
    <dbReference type="NCBI Taxonomy" id="211586"/>
    <lineage>
        <taxon>Bacteria</taxon>
        <taxon>Pseudomonadati</taxon>
        <taxon>Pseudomonadota</taxon>
        <taxon>Gammaproteobacteria</taxon>
        <taxon>Alteromonadales</taxon>
        <taxon>Shewanellaceae</taxon>
        <taxon>Shewanella</taxon>
    </lineage>
</organism>
<sequence>MRVLGIETSCDETGIAVYDDKLGLLSHALYSQVKLHADYGGVVPELASRDHVRKIVPLIRQALKNANTDIADIDGIAYTKGPGLIGALLVGACVGRSLAFAWNKPAIGVHHMEGHLLAPMLEEDAPEFPFVALLVSGGHSMLVKVDGIGLYAVLGESVDDAAGEAFDKTAKLMGLDYPGGPRLAKLAAKGEPAGYQFPRPMTDRPGLDFSFSGLKTFTANTIAAEPDDEQTRANIARAFEEAVVDTLAIKCRRALKQTGYNRLVIAGGVSANTRLRETLAEMMTSIGGRVYYPRGEFCTDNGAMIAFAGLQRLKAGQQEDLAVKGQPRWPLDTLPPLA</sequence>
<accession>Q8EHD6</accession>
<reference key="1">
    <citation type="journal article" date="2002" name="Nat. Biotechnol.">
        <title>Genome sequence of the dissimilatory metal ion-reducing bacterium Shewanella oneidensis.</title>
        <authorList>
            <person name="Heidelberg J.F."/>
            <person name="Paulsen I.T."/>
            <person name="Nelson K.E."/>
            <person name="Gaidos E.J."/>
            <person name="Nelson W.C."/>
            <person name="Read T.D."/>
            <person name="Eisen J.A."/>
            <person name="Seshadri R."/>
            <person name="Ward N.L."/>
            <person name="Methe B.A."/>
            <person name="Clayton R.A."/>
            <person name="Meyer T."/>
            <person name="Tsapin A."/>
            <person name="Scott J."/>
            <person name="Beanan M.J."/>
            <person name="Brinkac L.M."/>
            <person name="Daugherty S.C."/>
            <person name="DeBoy R.T."/>
            <person name="Dodson R.J."/>
            <person name="Durkin A.S."/>
            <person name="Haft D.H."/>
            <person name="Kolonay J.F."/>
            <person name="Madupu R."/>
            <person name="Peterson J.D."/>
            <person name="Umayam L.A."/>
            <person name="White O."/>
            <person name="Wolf A.M."/>
            <person name="Vamathevan J.J."/>
            <person name="Weidman J.F."/>
            <person name="Impraim M."/>
            <person name="Lee K."/>
            <person name="Berry K.J."/>
            <person name="Lee C."/>
            <person name="Mueller J."/>
            <person name="Khouri H.M."/>
            <person name="Gill J."/>
            <person name="Utterback T.R."/>
            <person name="McDonald L.A."/>
            <person name="Feldblyum T.V."/>
            <person name="Smith H.O."/>
            <person name="Venter J.C."/>
            <person name="Nealson K.H."/>
            <person name="Fraser C.M."/>
        </authorList>
    </citation>
    <scope>NUCLEOTIDE SEQUENCE [LARGE SCALE GENOMIC DNA]</scope>
    <source>
        <strain>ATCC 700550 / JCM 31522 / CIP 106686 / LMG 19005 / NCIMB 14063 / MR-1</strain>
    </source>
</reference>
<gene>
    <name evidence="1" type="primary">tsaD</name>
    <name type="synonym">gcp</name>
    <name type="ordered locus">SO_1289</name>
</gene>